<name>ISC10_YEAST</name>
<gene>
    <name type="primary">ISC10</name>
    <name type="ordered locus">YER180C</name>
    <name type="ORF">SYGP-ORF62</name>
</gene>
<feature type="chain" id="PRO_0000084242" description="Meiosis-specific protein ISC10">
    <location>
        <begin position="1"/>
        <end position="267"/>
    </location>
</feature>
<feature type="region of interest" description="Disordered" evidence="1">
    <location>
        <begin position="1"/>
        <end position="26"/>
    </location>
</feature>
<feature type="compositionally biased region" description="Basic and acidic residues" evidence="1">
    <location>
        <begin position="1"/>
        <end position="13"/>
    </location>
</feature>
<feature type="compositionally biased region" description="Polar residues" evidence="1">
    <location>
        <begin position="14"/>
        <end position="25"/>
    </location>
</feature>
<dbReference type="EMBL" id="D10865">
    <property type="protein sequence ID" value="BAA01638.1"/>
    <property type="molecule type" value="Genomic_DNA"/>
</dbReference>
<dbReference type="EMBL" id="U18922">
    <property type="protein sequence ID" value="AAB64707.1"/>
    <property type="molecule type" value="Genomic_DNA"/>
</dbReference>
<dbReference type="EMBL" id="BK006939">
    <property type="protein sequence ID" value="DAA07843.1"/>
    <property type="molecule type" value="Genomic_DNA"/>
</dbReference>
<dbReference type="PIR" id="S30277">
    <property type="entry name" value="S30277"/>
</dbReference>
<dbReference type="RefSeq" id="NP_011107.1">
    <property type="nucleotide sequence ID" value="NM_001179070.1"/>
</dbReference>
<dbReference type="BioGRID" id="36933">
    <property type="interactions" value="76"/>
</dbReference>
<dbReference type="DIP" id="DIP-1397N"/>
<dbReference type="FunCoup" id="P32645">
    <property type="interactions" value="29"/>
</dbReference>
<dbReference type="IntAct" id="P32645">
    <property type="interactions" value="4"/>
</dbReference>
<dbReference type="MINT" id="P32645"/>
<dbReference type="STRING" id="4932.YER180C"/>
<dbReference type="iPTMnet" id="P32645"/>
<dbReference type="PaxDb" id="4932-YER180C"/>
<dbReference type="EnsemblFungi" id="YER180C_mRNA">
    <property type="protein sequence ID" value="YER180C"/>
    <property type="gene ID" value="YER180C"/>
</dbReference>
<dbReference type="GeneID" id="856927"/>
<dbReference type="KEGG" id="sce:YER180C"/>
<dbReference type="AGR" id="SGD:S000000982"/>
<dbReference type="SGD" id="S000000982">
    <property type="gene designation" value="ISC10"/>
</dbReference>
<dbReference type="VEuPathDB" id="FungiDB:YER180C"/>
<dbReference type="eggNOG" id="ENOG502S87G">
    <property type="taxonomic scope" value="Eukaryota"/>
</dbReference>
<dbReference type="HOGENOM" id="CLU_089051_0_0_1"/>
<dbReference type="InParanoid" id="P32645"/>
<dbReference type="OMA" id="XITDEIA"/>
<dbReference type="OrthoDB" id="6067455at2759"/>
<dbReference type="BioCyc" id="YEAST:G3O-30338-MONOMER"/>
<dbReference type="BioGRID-ORCS" id="856927">
    <property type="hits" value="4 hits in 10 CRISPR screens"/>
</dbReference>
<dbReference type="PRO" id="PR:P32645"/>
<dbReference type="Proteomes" id="UP000002311">
    <property type="component" value="Chromosome V"/>
</dbReference>
<dbReference type="RNAct" id="P32645">
    <property type="molecule type" value="protein"/>
</dbReference>
<dbReference type="GO" id="GO:0051019">
    <property type="term" value="F:mitogen-activated protein kinase binding"/>
    <property type="evidence" value="ECO:0000314"/>
    <property type="project" value="SGD"/>
</dbReference>
<dbReference type="GO" id="GO:0004860">
    <property type="term" value="F:protein kinase inhibitor activity"/>
    <property type="evidence" value="ECO:0000314"/>
    <property type="project" value="SGD"/>
</dbReference>
<dbReference type="GO" id="GO:0030437">
    <property type="term" value="P:ascospore formation"/>
    <property type="evidence" value="ECO:0000315"/>
    <property type="project" value="SGD"/>
</dbReference>
<comment type="function">
    <text>Indispensable for spore formation.</text>
</comment>
<comment type="developmental stage">
    <text>Expressed 7.5 hours after induction of meiosis.</text>
</comment>
<accession>P32645</accession>
<accession>D3DM89</accession>
<organism>
    <name type="scientific">Saccharomyces cerevisiae (strain ATCC 204508 / S288c)</name>
    <name type="common">Baker's yeast</name>
    <dbReference type="NCBI Taxonomy" id="559292"/>
    <lineage>
        <taxon>Eukaryota</taxon>
        <taxon>Fungi</taxon>
        <taxon>Dikarya</taxon>
        <taxon>Ascomycota</taxon>
        <taxon>Saccharomycotina</taxon>
        <taxon>Saccharomycetes</taxon>
        <taxon>Saccharomycetales</taxon>
        <taxon>Saccharomycetaceae</taxon>
        <taxon>Saccharomyces</taxon>
    </lineage>
</organism>
<proteinExistence type="evidence at transcript level"/>
<protein>
    <recommendedName>
        <fullName>Meiosis-specific protein ISC10</fullName>
    </recommendedName>
</protein>
<evidence type="ECO:0000256" key="1">
    <source>
        <dbReference type="SAM" id="MobiDB-lite"/>
    </source>
</evidence>
<sequence length="267" mass="31655">MDVDERLHQDENQTHPFSQKKSSSFLIKEKAATKSKDLEHIRLRDLNFNHRKKLDDKKLAKQIPVKANFKKPNEIEARANLNSNELTDINLDYIPDSPSIEKISGPEDSIVVTPRNIIHLQSDSDIILEECEHNYDCSPFYRLFNYENRIEPDDYEAIINAIITDEIAGTYPVFERELEYQELKSLVRKRDYIMYYFLSRDYRGFFQLKEERTLFYRYPSIAYTSPLRYLDNGSETEQFTGDDDEELQSFDFENTSSVRTLDSNIWR</sequence>
<keyword id="KW-0131">Cell cycle</keyword>
<keyword id="KW-0469">Meiosis</keyword>
<keyword id="KW-1185">Reference proteome</keyword>
<keyword id="KW-0749">Sporulation</keyword>
<reference key="1">
    <citation type="journal article" date="1993" name="Mol. Gen. Genet.">
        <title>Isolation and characterization of a yeast gene that is homologous with a meiosis-specific cDNA from a plant.</title>
        <authorList>
            <person name="Kobayashi T."/>
            <person name="Hotta Y."/>
            <person name="Tabata S."/>
        </authorList>
    </citation>
    <scope>NUCLEOTIDE SEQUENCE [GENOMIC DNA]</scope>
    <source>
        <strain>SK1</strain>
    </source>
</reference>
<reference key="2">
    <citation type="journal article" date="1997" name="Nature">
        <title>The nucleotide sequence of Saccharomyces cerevisiae chromosome V.</title>
        <authorList>
            <person name="Dietrich F.S."/>
            <person name="Mulligan J.T."/>
            <person name="Hennessy K.M."/>
            <person name="Yelton M.A."/>
            <person name="Allen E."/>
            <person name="Araujo R."/>
            <person name="Aviles E."/>
            <person name="Berno A."/>
            <person name="Brennan T."/>
            <person name="Carpenter J."/>
            <person name="Chen E."/>
            <person name="Cherry J.M."/>
            <person name="Chung E."/>
            <person name="Duncan M."/>
            <person name="Guzman E."/>
            <person name="Hartzell G."/>
            <person name="Hunicke-Smith S."/>
            <person name="Hyman R.W."/>
            <person name="Kayser A."/>
            <person name="Komp C."/>
            <person name="Lashkari D."/>
            <person name="Lew H."/>
            <person name="Lin D."/>
            <person name="Mosedale D."/>
            <person name="Nakahara K."/>
            <person name="Namath A."/>
            <person name="Norgren R."/>
            <person name="Oefner P."/>
            <person name="Oh C."/>
            <person name="Petel F.X."/>
            <person name="Roberts D."/>
            <person name="Sehl P."/>
            <person name="Schramm S."/>
            <person name="Shogren T."/>
            <person name="Smith V."/>
            <person name="Taylor P."/>
            <person name="Wei Y."/>
            <person name="Botstein D."/>
            <person name="Davis R.W."/>
        </authorList>
    </citation>
    <scope>NUCLEOTIDE SEQUENCE [LARGE SCALE GENOMIC DNA]</scope>
    <source>
        <strain>ATCC 204508 / S288c</strain>
    </source>
</reference>
<reference key="3">
    <citation type="journal article" date="2014" name="G3 (Bethesda)">
        <title>The reference genome sequence of Saccharomyces cerevisiae: Then and now.</title>
        <authorList>
            <person name="Engel S.R."/>
            <person name="Dietrich F.S."/>
            <person name="Fisk D.G."/>
            <person name="Binkley G."/>
            <person name="Balakrishnan R."/>
            <person name="Costanzo M.C."/>
            <person name="Dwight S.S."/>
            <person name="Hitz B.C."/>
            <person name="Karra K."/>
            <person name="Nash R.S."/>
            <person name="Weng S."/>
            <person name="Wong E.D."/>
            <person name="Lloyd P."/>
            <person name="Skrzypek M.S."/>
            <person name="Miyasato S.R."/>
            <person name="Simison M."/>
            <person name="Cherry J.M."/>
        </authorList>
    </citation>
    <scope>GENOME REANNOTATION</scope>
    <source>
        <strain>ATCC 204508 / S288c</strain>
    </source>
</reference>